<reference key="1">
    <citation type="journal article" date="2008" name="Genome Biol.">
        <title>The complete genome, comparative and functional analysis of Stenotrophomonas maltophilia reveals an organism heavily shielded by drug resistance determinants.</title>
        <authorList>
            <person name="Crossman L.C."/>
            <person name="Gould V.C."/>
            <person name="Dow J.M."/>
            <person name="Vernikos G.S."/>
            <person name="Okazaki A."/>
            <person name="Sebaihia M."/>
            <person name="Saunders D."/>
            <person name="Arrowsmith C."/>
            <person name="Carver T."/>
            <person name="Peters N."/>
            <person name="Adlem E."/>
            <person name="Kerhornou A."/>
            <person name="Lord A."/>
            <person name="Murphy L."/>
            <person name="Seeger K."/>
            <person name="Squares R."/>
            <person name="Rutter S."/>
            <person name="Quail M.A."/>
            <person name="Rajandream M.A."/>
            <person name="Harris D."/>
            <person name="Churcher C."/>
            <person name="Bentley S.D."/>
            <person name="Parkhill J."/>
            <person name="Thomson N.R."/>
            <person name="Avison M.B."/>
        </authorList>
    </citation>
    <scope>NUCLEOTIDE SEQUENCE [LARGE SCALE GENOMIC DNA]</scope>
    <source>
        <strain>K279a</strain>
    </source>
</reference>
<organism>
    <name type="scientific">Stenotrophomonas maltophilia (strain K279a)</name>
    <dbReference type="NCBI Taxonomy" id="522373"/>
    <lineage>
        <taxon>Bacteria</taxon>
        <taxon>Pseudomonadati</taxon>
        <taxon>Pseudomonadota</taxon>
        <taxon>Gammaproteobacteria</taxon>
        <taxon>Lysobacterales</taxon>
        <taxon>Lysobacteraceae</taxon>
        <taxon>Stenotrophomonas</taxon>
        <taxon>Stenotrophomonas maltophilia group</taxon>
    </lineage>
</organism>
<keyword id="KW-0963">Cytoplasm</keyword>
<keyword id="KW-0489">Methyltransferase</keyword>
<keyword id="KW-1185">Reference proteome</keyword>
<keyword id="KW-0698">rRNA processing</keyword>
<keyword id="KW-0949">S-adenosyl-L-methionine</keyword>
<keyword id="KW-0808">Transferase</keyword>
<proteinExistence type="inferred from homology"/>
<protein>
    <recommendedName>
        <fullName evidence="1">Ribosomal RNA large subunit methyltransferase E</fullName>
        <ecNumber evidence="1">2.1.1.166</ecNumber>
    </recommendedName>
    <alternativeName>
        <fullName evidence="1">23S rRNA Um2552 methyltransferase</fullName>
    </alternativeName>
    <alternativeName>
        <fullName evidence="1">rRNA (uridine-2'-O-)-methyltransferase</fullName>
    </alternativeName>
</protein>
<name>RLME_STRMK</name>
<dbReference type="EC" id="2.1.1.166" evidence="1"/>
<dbReference type="EMBL" id="AM743169">
    <property type="protein sequence ID" value="CAQ45252.1"/>
    <property type="molecule type" value="Genomic_DNA"/>
</dbReference>
<dbReference type="RefSeq" id="WP_005409014.1">
    <property type="nucleotide sequence ID" value="NC_010943.1"/>
</dbReference>
<dbReference type="SMR" id="B2FKA1"/>
<dbReference type="EnsemblBacteria" id="CAQ45252">
    <property type="protein sequence ID" value="CAQ45252"/>
    <property type="gene ID" value="Smlt1728"/>
</dbReference>
<dbReference type="GeneID" id="97260640"/>
<dbReference type="KEGG" id="sml:Smlt1728"/>
<dbReference type="eggNOG" id="COG0293">
    <property type="taxonomic scope" value="Bacteria"/>
</dbReference>
<dbReference type="HOGENOM" id="CLU_009422_4_0_6"/>
<dbReference type="Proteomes" id="UP000008840">
    <property type="component" value="Chromosome"/>
</dbReference>
<dbReference type="GO" id="GO:0005737">
    <property type="term" value="C:cytoplasm"/>
    <property type="evidence" value="ECO:0007669"/>
    <property type="project" value="UniProtKB-SubCell"/>
</dbReference>
<dbReference type="GO" id="GO:0008650">
    <property type="term" value="F:rRNA (uridine-2'-O-)-methyltransferase activity"/>
    <property type="evidence" value="ECO:0007669"/>
    <property type="project" value="UniProtKB-UniRule"/>
</dbReference>
<dbReference type="FunFam" id="3.40.50.150:FF:000005">
    <property type="entry name" value="Ribosomal RNA large subunit methyltransferase E"/>
    <property type="match status" value="1"/>
</dbReference>
<dbReference type="Gene3D" id="3.40.50.150">
    <property type="entry name" value="Vaccinia Virus protein VP39"/>
    <property type="match status" value="1"/>
</dbReference>
<dbReference type="HAMAP" id="MF_01547">
    <property type="entry name" value="RNA_methyltr_E"/>
    <property type="match status" value="1"/>
</dbReference>
<dbReference type="InterPro" id="IPR050082">
    <property type="entry name" value="RNA_methyltr_RlmE"/>
</dbReference>
<dbReference type="InterPro" id="IPR002877">
    <property type="entry name" value="RNA_MeTrfase_FtsJ_dom"/>
</dbReference>
<dbReference type="InterPro" id="IPR015507">
    <property type="entry name" value="rRNA-MeTfrase_E"/>
</dbReference>
<dbReference type="InterPro" id="IPR029063">
    <property type="entry name" value="SAM-dependent_MTases_sf"/>
</dbReference>
<dbReference type="NCBIfam" id="NF008390">
    <property type="entry name" value="PRK11188.1"/>
    <property type="match status" value="1"/>
</dbReference>
<dbReference type="PANTHER" id="PTHR10920">
    <property type="entry name" value="RIBOSOMAL RNA METHYLTRANSFERASE"/>
    <property type="match status" value="1"/>
</dbReference>
<dbReference type="PANTHER" id="PTHR10920:SF18">
    <property type="entry name" value="RRNA METHYLTRANSFERASE 2, MITOCHONDRIAL"/>
    <property type="match status" value="1"/>
</dbReference>
<dbReference type="Pfam" id="PF01728">
    <property type="entry name" value="FtsJ"/>
    <property type="match status" value="1"/>
</dbReference>
<dbReference type="PIRSF" id="PIRSF005461">
    <property type="entry name" value="23S_rRNA_mtase"/>
    <property type="match status" value="1"/>
</dbReference>
<dbReference type="SUPFAM" id="SSF53335">
    <property type="entry name" value="S-adenosyl-L-methionine-dependent methyltransferases"/>
    <property type="match status" value="1"/>
</dbReference>
<accession>B2FKA1</accession>
<comment type="function">
    <text evidence="1">Specifically methylates the uridine in position 2552 of 23S rRNA at the 2'-O position of the ribose in the fully assembled 50S ribosomal subunit.</text>
</comment>
<comment type="catalytic activity">
    <reaction evidence="1">
        <text>uridine(2552) in 23S rRNA + S-adenosyl-L-methionine = 2'-O-methyluridine(2552) in 23S rRNA + S-adenosyl-L-homocysteine + H(+)</text>
        <dbReference type="Rhea" id="RHEA:42720"/>
        <dbReference type="Rhea" id="RHEA-COMP:10202"/>
        <dbReference type="Rhea" id="RHEA-COMP:10203"/>
        <dbReference type="ChEBI" id="CHEBI:15378"/>
        <dbReference type="ChEBI" id="CHEBI:57856"/>
        <dbReference type="ChEBI" id="CHEBI:59789"/>
        <dbReference type="ChEBI" id="CHEBI:65315"/>
        <dbReference type="ChEBI" id="CHEBI:74478"/>
        <dbReference type="EC" id="2.1.1.166"/>
    </reaction>
</comment>
<comment type="subcellular location">
    <subcellularLocation>
        <location evidence="1">Cytoplasm</location>
    </subcellularLocation>
</comment>
<comment type="similarity">
    <text evidence="1">Belongs to the class I-like SAM-binding methyltransferase superfamily. RNA methyltransferase RlmE family.</text>
</comment>
<gene>
    <name evidence="1" type="primary">rlmE</name>
    <name evidence="1" type="synonym">ftsJ</name>
    <name evidence="1" type="synonym">rrmJ</name>
    <name type="ordered locus">Smlt1728</name>
</gene>
<sequence>MATRSKSSQRWLKEHFSDPFVKKAQAEGMRSRAAYKLEELLERDRLLKPHMVVVDLGAAPGGWSQQVRRQIGDTGRVLALDILDMPPLAGVEFLHGDFREEAVLSQFEAMLGDQPVDLVLSDMAPNKSGVGAVDQPRMMHLAELALDFADNHLKTGGAFLIKLFQGEGFDDYVRDMRRRYDKVSIRKPEASRKRSPEVYALGQGKRAHMK</sequence>
<feature type="chain" id="PRO_1000195023" description="Ribosomal RNA large subunit methyltransferase E">
    <location>
        <begin position="1"/>
        <end position="210"/>
    </location>
</feature>
<feature type="region of interest" description="Disordered" evidence="2">
    <location>
        <begin position="187"/>
        <end position="210"/>
    </location>
</feature>
<feature type="compositionally biased region" description="Basic and acidic residues" evidence="2">
    <location>
        <begin position="187"/>
        <end position="196"/>
    </location>
</feature>
<feature type="active site" description="Proton acceptor" evidence="1">
    <location>
        <position position="162"/>
    </location>
</feature>
<feature type="binding site" evidence="1">
    <location>
        <position position="61"/>
    </location>
    <ligand>
        <name>S-adenosyl-L-methionine</name>
        <dbReference type="ChEBI" id="CHEBI:59789"/>
    </ligand>
</feature>
<feature type="binding site" evidence="1">
    <location>
        <position position="63"/>
    </location>
    <ligand>
        <name>S-adenosyl-L-methionine</name>
        <dbReference type="ChEBI" id="CHEBI:59789"/>
    </ligand>
</feature>
<feature type="binding site" evidence="1">
    <location>
        <position position="81"/>
    </location>
    <ligand>
        <name>S-adenosyl-L-methionine</name>
        <dbReference type="ChEBI" id="CHEBI:59789"/>
    </ligand>
</feature>
<feature type="binding site" evidence="1">
    <location>
        <position position="97"/>
    </location>
    <ligand>
        <name>S-adenosyl-L-methionine</name>
        <dbReference type="ChEBI" id="CHEBI:59789"/>
    </ligand>
</feature>
<feature type="binding site" evidence="1">
    <location>
        <position position="122"/>
    </location>
    <ligand>
        <name>S-adenosyl-L-methionine</name>
        <dbReference type="ChEBI" id="CHEBI:59789"/>
    </ligand>
</feature>
<evidence type="ECO:0000255" key="1">
    <source>
        <dbReference type="HAMAP-Rule" id="MF_01547"/>
    </source>
</evidence>
<evidence type="ECO:0000256" key="2">
    <source>
        <dbReference type="SAM" id="MobiDB-lite"/>
    </source>
</evidence>